<dbReference type="EMBL" id="CP001052">
    <property type="protein sequence ID" value="ACD17540.1"/>
    <property type="molecule type" value="Genomic_DNA"/>
</dbReference>
<dbReference type="RefSeq" id="WP_012434113.1">
    <property type="nucleotide sequence ID" value="NC_010681.1"/>
</dbReference>
<dbReference type="SMR" id="B2T6H6"/>
<dbReference type="STRING" id="398527.Bphyt_3148"/>
<dbReference type="KEGG" id="bpy:Bphyt_3148"/>
<dbReference type="eggNOG" id="COG2003">
    <property type="taxonomic scope" value="Bacteria"/>
</dbReference>
<dbReference type="HOGENOM" id="CLU_073529_0_1_4"/>
<dbReference type="OrthoDB" id="9804482at2"/>
<dbReference type="Proteomes" id="UP000001739">
    <property type="component" value="Chromosome 1"/>
</dbReference>
<dbReference type="GO" id="GO:0046872">
    <property type="term" value="F:metal ion binding"/>
    <property type="evidence" value="ECO:0007669"/>
    <property type="project" value="UniProtKB-KW"/>
</dbReference>
<dbReference type="GO" id="GO:0008237">
    <property type="term" value="F:metallopeptidase activity"/>
    <property type="evidence" value="ECO:0007669"/>
    <property type="project" value="UniProtKB-KW"/>
</dbReference>
<dbReference type="GO" id="GO:0006508">
    <property type="term" value="P:proteolysis"/>
    <property type="evidence" value="ECO:0007669"/>
    <property type="project" value="UniProtKB-KW"/>
</dbReference>
<dbReference type="CDD" id="cd08071">
    <property type="entry name" value="MPN_DUF2466"/>
    <property type="match status" value="1"/>
</dbReference>
<dbReference type="Gene3D" id="3.40.140.10">
    <property type="entry name" value="Cytidine Deaminase, domain 2"/>
    <property type="match status" value="1"/>
</dbReference>
<dbReference type="InterPro" id="IPR037518">
    <property type="entry name" value="MPN"/>
</dbReference>
<dbReference type="InterPro" id="IPR025657">
    <property type="entry name" value="RadC_JAB"/>
</dbReference>
<dbReference type="InterPro" id="IPR010994">
    <property type="entry name" value="RuvA_2-like"/>
</dbReference>
<dbReference type="InterPro" id="IPR001405">
    <property type="entry name" value="UPF0758"/>
</dbReference>
<dbReference type="InterPro" id="IPR020891">
    <property type="entry name" value="UPF0758_CS"/>
</dbReference>
<dbReference type="InterPro" id="IPR046778">
    <property type="entry name" value="UPF0758_N"/>
</dbReference>
<dbReference type="NCBIfam" id="NF000642">
    <property type="entry name" value="PRK00024.1"/>
    <property type="match status" value="1"/>
</dbReference>
<dbReference type="NCBIfam" id="TIGR00608">
    <property type="entry name" value="radc"/>
    <property type="match status" value="1"/>
</dbReference>
<dbReference type="PANTHER" id="PTHR30471">
    <property type="entry name" value="DNA REPAIR PROTEIN RADC"/>
    <property type="match status" value="1"/>
</dbReference>
<dbReference type="PANTHER" id="PTHR30471:SF3">
    <property type="entry name" value="UPF0758 PROTEIN YEES-RELATED"/>
    <property type="match status" value="1"/>
</dbReference>
<dbReference type="Pfam" id="PF04002">
    <property type="entry name" value="RadC"/>
    <property type="match status" value="1"/>
</dbReference>
<dbReference type="Pfam" id="PF20582">
    <property type="entry name" value="UPF0758_N"/>
    <property type="match status" value="1"/>
</dbReference>
<dbReference type="SUPFAM" id="SSF47781">
    <property type="entry name" value="RuvA domain 2-like"/>
    <property type="match status" value="1"/>
</dbReference>
<dbReference type="PROSITE" id="PS50249">
    <property type="entry name" value="MPN"/>
    <property type="match status" value="1"/>
</dbReference>
<dbReference type="PROSITE" id="PS01302">
    <property type="entry name" value="UPF0758"/>
    <property type="match status" value="1"/>
</dbReference>
<proteinExistence type="inferred from homology"/>
<protein>
    <recommendedName>
        <fullName>UPF0758 protein Bphyt_3148</fullName>
    </recommendedName>
</protein>
<accession>B2T6H6</accession>
<sequence length="259" mass="28224">MAEDATLVDETALEAAAGESPPSNATACGELAPSPLLRGKWLKDDMPRERLLRQGPGVLSDTEMIVLILGSGLPGHDVFSVARELLDRFGSLRAMLDATYTDFDGLRGIGPAKKAQLLAIMEMARRSLVDKLRSRSLLNSPEAVENYLRLRIGGRPLEVFVSLFLDARHRLIHCEESAQGTLTRMAVYPREIVRRALSLNAASLIVAHNHPSGAVQPSASDCRLTHTLRDALTLIDVQLVDHLVVGVDSVYSFARAGWP</sequence>
<reference key="1">
    <citation type="journal article" date="2011" name="J. Bacteriol.">
        <title>Complete genome sequence of the plant growth-promoting endophyte Burkholderia phytofirmans strain PsJN.</title>
        <authorList>
            <person name="Weilharter A."/>
            <person name="Mitter B."/>
            <person name="Shin M.V."/>
            <person name="Chain P.S."/>
            <person name="Nowak J."/>
            <person name="Sessitsch A."/>
        </authorList>
    </citation>
    <scope>NUCLEOTIDE SEQUENCE [LARGE SCALE GENOMIC DNA]</scope>
    <source>
        <strain>DSM 17436 / LMG 22146 / PsJN</strain>
    </source>
</reference>
<evidence type="ECO:0000255" key="1">
    <source>
        <dbReference type="PROSITE-ProRule" id="PRU01182"/>
    </source>
</evidence>
<evidence type="ECO:0000305" key="2"/>
<feature type="chain" id="PRO_1000089798" description="UPF0758 protein Bphyt_3148">
    <location>
        <begin position="1"/>
        <end position="259"/>
    </location>
</feature>
<feature type="domain" description="MPN" evidence="1">
    <location>
        <begin position="137"/>
        <end position="259"/>
    </location>
</feature>
<feature type="short sequence motif" description="JAMM motif" evidence="1">
    <location>
        <begin position="208"/>
        <end position="221"/>
    </location>
</feature>
<feature type="binding site" evidence="1">
    <location>
        <position position="208"/>
    </location>
    <ligand>
        <name>Zn(2+)</name>
        <dbReference type="ChEBI" id="CHEBI:29105"/>
        <note>catalytic</note>
    </ligand>
</feature>
<feature type="binding site" evidence="1">
    <location>
        <position position="210"/>
    </location>
    <ligand>
        <name>Zn(2+)</name>
        <dbReference type="ChEBI" id="CHEBI:29105"/>
        <note>catalytic</note>
    </ligand>
</feature>
<feature type="binding site" evidence="1">
    <location>
        <position position="221"/>
    </location>
    <ligand>
        <name>Zn(2+)</name>
        <dbReference type="ChEBI" id="CHEBI:29105"/>
        <note>catalytic</note>
    </ligand>
</feature>
<name>Y3148_PARPJ</name>
<keyword id="KW-0378">Hydrolase</keyword>
<keyword id="KW-0479">Metal-binding</keyword>
<keyword id="KW-0482">Metalloprotease</keyword>
<keyword id="KW-0645">Protease</keyword>
<keyword id="KW-0862">Zinc</keyword>
<comment type="similarity">
    <text evidence="2">Belongs to the UPF0758 family.</text>
</comment>
<organism>
    <name type="scientific">Paraburkholderia phytofirmans (strain DSM 17436 / LMG 22146 / PsJN)</name>
    <name type="common">Burkholderia phytofirmans</name>
    <dbReference type="NCBI Taxonomy" id="398527"/>
    <lineage>
        <taxon>Bacteria</taxon>
        <taxon>Pseudomonadati</taxon>
        <taxon>Pseudomonadota</taxon>
        <taxon>Betaproteobacteria</taxon>
        <taxon>Burkholderiales</taxon>
        <taxon>Burkholderiaceae</taxon>
        <taxon>Paraburkholderia</taxon>
    </lineage>
</organism>
<gene>
    <name type="ordered locus">Bphyt_3148</name>
</gene>